<feature type="chain" id="PRO_1000000730" description="Endoribonuclease YbeY">
    <location>
        <begin position="1"/>
        <end position="171"/>
    </location>
</feature>
<feature type="binding site" evidence="1">
    <location>
        <position position="130"/>
    </location>
    <ligand>
        <name>Zn(2+)</name>
        <dbReference type="ChEBI" id="CHEBI:29105"/>
        <note>catalytic</note>
    </ligand>
</feature>
<feature type="binding site" evidence="1">
    <location>
        <position position="134"/>
    </location>
    <ligand>
        <name>Zn(2+)</name>
        <dbReference type="ChEBI" id="CHEBI:29105"/>
        <note>catalytic</note>
    </ligand>
</feature>
<feature type="binding site" evidence="1">
    <location>
        <position position="140"/>
    </location>
    <ligand>
        <name>Zn(2+)</name>
        <dbReference type="ChEBI" id="CHEBI:29105"/>
        <note>catalytic</note>
    </ligand>
</feature>
<dbReference type="EC" id="3.1.-.-" evidence="1"/>
<dbReference type="EMBL" id="AM421808">
    <property type="protein sequence ID" value="CAM09777.1"/>
    <property type="molecule type" value="Genomic_DNA"/>
</dbReference>
<dbReference type="RefSeq" id="WP_002221387.1">
    <property type="nucleotide sequence ID" value="NC_008767.1"/>
</dbReference>
<dbReference type="SMR" id="A1KSE7"/>
<dbReference type="KEGG" id="nmc:NMC0477"/>
<dbReference type="HOGENOM" id="CLU_106710_0_1_4"/>
<dbReference type="Proteomes" id="UP000002286">
    <property type="component" value="Chromosome"/>
</dbReference>
<dbReference type="GO" id="GO:0005737">
    <property type="term" value="C:cytoplasm"/>
    <property type="evidence" value="ECO:0007669"/>
    <property type="project" value="UniProtKB-SubCell"/>
</dbReference>
<dbReference type="GO" id="GO:0004222">
    <property type="term" value="F:metalloendopeptidase activity"/>
    <property type="evidence" value="ECO:0007669"/>
    <property type="project" value="InterPro"/>
</dbReference>
<dbReference type="GO" id="GO:0004521">
    <property type="term" value="F:RNA endonuclease activity"/>
    <property type="evidence" value="ECO:0007669"/>
    <property type="project" value="UniProtKB-UniRule"/>
</dbReference>
<dbReference type="GO" id="GO:0008270">
    <property type="term" value="F:zinc ion binding"/>
    <property type="evidence" value="ECO:0007669"/>
    <property type="project" value="UniProtKB-UniRule"/>
</dbReference>
<dbReference type="GO" id="GO:0006364">
    <property type="term" value="P:rRNA processing"/>
    <property type="evidence" value="ECO:0007669"/>
    <property type="project" value="UniProtKB-UniRule"/>
</dbReference>
<dbReference type="Gene3D" id="3.40.390.30">
    <property type="entry name" value="Metalloproteases ('zincins'), catalytic domain"/>
    <property type="match status" value="1"/>
</dbReference>
<dbReference type="HAMAP" id="MF_00009">
    <property type="entry name" value="Endoribonucl_YbeY"/>
    <property type="match status" value="1"/>
</dbReference>
<dbReference type="InterPro" id="IPR023091">
    <property type="entry name" value="MetalPrtase_cat_dom_sf_prd"/>
</dbReference>
<dbReference type="InterPro" id="IPR002036">
    <property type="entry name" value="YbeY"/>
</dbReference>
<dbReference type="InterPro" id="IPR020549">
    <property type="entry name" value="YbeY_CS"/>
</dbReference>
<dbReference type="NCBIfam" id="TIGR00043">
    <property type="entry name" value="rRNA maturation RNase YbeY"/>
    <property type="match status" value="1"/>
</dbReference>
<dbReference type="PANTHER" id="PTHR46986">
    <property type="entry name" value="ENDORIBONUCLEASE YBEY, CHLOROPLASTIC"/>
    <property type="match status" value="1"/>
</dbReference>
<dbReference type="PANTHER" id="PTHR46986:SF1">
    <property type="entry name" value="ENDORIBONUCLEASE YBEY, CHLOROPLASTIC"/>
    <property type="match status" value="1"/>
</dbReference>
<dbReference type="Pfam" id="PF02130">
    <property type="entry name" value="YbeY"/>
    <property type="match status" value="1"/>
</dbReference>
<dbReference type="SUPFAM" id="SSF55486">
    <property type="entry name" value="Metalloproteases ('zincins'), catalytic domain"/>
    <property type="match status" value="1"/>
</dbReference>
<dbReference type="PROSITE" id="PS01306">
    <property type="entry name" value="UPF0054"/>
    <property type="match status" value="1"/>
</dbReference>
<reference key="1">
    <citation type="journal article" date="2007" name="PLoS Genet.">
        <title>Meningococcal genetic variation mechanisms viewed through comparative analysis of serogroup C strain FAM18.</title>
        <authorList>
            <person name="Bentley S.D."/>
            <person name="Vernikos G.S."/>
            <person name="Snyder L.A.S."/>
            <person name="Churcher C."/>
            <person name="Arrowsmith C."/>
            <person name="Chillingworth T."/>
            <person name="Cronin A."/>
            <person name="Davis P.H."/>
            <person name="Holroyd N.E."/>
            <person name="Jagels K."/>
            <person name="Maddison M."/>
            <person name="Moule S."/>
            <person name="Rabbinowitsch E."/>
            <person name="Sharp S."/>
            <person name="Unwin L."/>
            <person name="Whitehead S."/>
            <person name="Quail M.A."/>
            <person name="Achtman M."/>
            <person name="Barrell B.G."/>
            <person name="Saunders N.J."/>
            <person name="Parkhill J."/>
        </authorList>
    </citation>
    <scope>NUCLEOTIDE SEQUENCE [LARGE SCALE GENOMIC DNA]</scope>
    <source>
        <strain>ATCC 700532 / DSM 15464 / FAM18</strain>
    </source>
</reference>
<name>YBEY_NEIMF</name>
<evidence type="ECO:0000255" key="1">
    <source>
        <dbReference type="HAMAP-Rule" id="MF_00009"/>
    </source>
</evidence>
<accession>A1KSE7</accession>
<comment type="function">
    <text evidence="1">Single strand-specific metallo-endoribonuclease involved in late-stage 70S ribosome quality control and in maturation of the 3' terminus of the 16S rRNA.</text>
</comment>
<comment type="cofactor">
    <cofactor evidence="1">
        <name>Zn(2+)</name>
        <dbReference type="ChEBI" id="CHEBI:29105"/>
    </cofactor>
    <text evidence="1">Binds 1 zinc ion.</text>
</comment>
<comment type="subcellular location">
    <subcellularLocation>
        <location evidence="1">Cytoplasm</location>
    </subcellularLocation>
</comment>
<comment type="similarity">
    <text evidence="1">Belongs to the endoribonuclease YbeY family.</text>
</comment>
<sequence>MKRTKKYPFLTLQRQRFHLNFENASSAAGIPAERDFYRWAWSALKNEYRRADISLILLDEEEARAYNRDYRGKDYATNVLSFALNEGEILPCQVSEKLYGDLIICPQVVLKEAAEQGKTPERHFAHLTIHGVLHLMGYDHIEDDEAEIMEAEEIRLMLAAGFPNPYQEDEY</sequence>
<organism>
    <name type="scientific">Neisseria meningitidis serogroup C / serotype 2a (strain ATCC 700532 / DSM 15464 / FAM18)</name>
    <dbReference type="NCBI Taxonomy" id="272831"/>
    <lineage>
        <taxon>Bacteria</taxon>
        <taxon>Pseudomonadati</taxon>
        <taxon>Pseudomonadota</taxon>
        <taxon>Betaproteobacteria</taxon>
        <taxon>Neisseriales</taxon>
        <taxon>Neisseriaceae</taxon>
        <taxon>Neisseria</taxon>
    </lineage>
</organism>
<protein>
    <recommendedName>
        <fullName evidence="1">Endoribonuclease YbeY</fullName>
        <ecNumber evidence="1">3.1.-.-</ecNumber>
    </recommendedName>
</protein>
<proteinExistence type="inferred from homology"/>
<keyword id="KW-0963">Cytoplasm</keyword>
<keyword id="KW-0255">Endonuclease</keyword>
<keyword id="KW-0378">Hydrolase</keyword>
<keyword id="KW-0479">Metal-binding</keyword>
<keyword id="KW-0540">Nuclease</keyword>
<keyword id="KW-0690">Ribosome biogenesis</keyword>
<keyword id="KW-0698">rRNA processing</keyword>
<keyword id="KW-0862">Zinc</keyword>
<gene>
    <name evidence="1" type="primary">ybeY</name>
    <name type="ordered locus">NMC0477</name>
</gene>